<evidence type="ECO:0000255" key="1">
    <source>
        <dbReference type="HAMAP-Rule" id="MF_01675"/>
    </source>
</evidence>
<accession>Q8TSS3</accession>
<reference key="1">
    <citation type="journal article" date="2002" name="Genome Res.">
        <title>The genome of Methanosarcina acetivorans reveals extensive metabolic and physiological diversity.</title>
        <authorList>
            <person name="Galagan J.E."/>
            <person name="Nusbaum C."/>
            <person name="Roy A."/>
            <person name="Endrizzi M.G."/>
            <person name="Macdonald P."/>
            <person name="FitzHugh W."/>
            <person name="Calvo S."/>
            <person name="Engels R."/>
            <person name="Smirnov S."/>
            <person name="Atnoor D."/>
            <person name="Brown A."/>
            <person name="Allen N."/>
            <person name="Naylor J."/>
            <person name="Stange-Thomann N."/>
            <person name="DeArellano K."/>
            <person name="Johnson R."/>
            <person name="Linton L."/>
            <person name="McEwan P."/>
            <person name="McKernan K."/>
            <person name="Talamas J."/>
            <person name="Tirrell A."/>
            <person name="Ye W."/>
            <person name="Zimmer A."/>
            <person name="Barber R.D."/>
            <person name="Cann I."/>
            <person name="Graham D.E."/>
            <person name="Grahame D.A."/>
            <person name="Guss A.M."/>
            <person name="Hedderich R."/>
            <person name="Ingram-Smith C."/>
            <person name="Kuettner H.C."/>
            <person name="Krzycki J.A."/>
            <person name="Leigh J.A."/>
            <person name="Li W."/>
            <person name="Liu J."/>
            <person name="Mukhopadhyay B."/>
            <person name="Reeve J.N."/>
            <person name="Smith K."/>
            <person name="Springer T.A."/>
            <person name="Umayam L.A."/>
            <person name="White O."/>
            <person name="White R.H."/>
            <person name="de Macario E.C."/>
            <person name="Ferry J.G."/>
            <person name="Jarrell K.F."/>
            <person name="Jing H."/>
            <person name="Macario A.J.L."/>
            <person name="Paulsen I.T."/>
            <person name="Pritchett M."/>
            <person name="Sowers K.R."/>
            <person name="Swanson R.V."/>
            <person name="Zinder S.H."/>
            <person name="Lander E."/>
            <person name="Metcalf W.W."/>
            <person name="Birren B."/>
        </authorList>
    </citation>
    <scope>NUCLEOTIDE SEQUENCE [LARGE SCALE GENOMIC DNA]</scope>
    <source>
        <strain>ATCC 35395 / DSM 2834 / JCM 12185 / C2A</strain>
    </source>
</reference>
<sequence length="386" mass="42483">MTLDDSSLQKYGFIKRETLGSINIDPLQTGGLLTEAARQALVEWGDGYSVCDFCGGVLDQIKKPPIHDFVHKALPEFLGCDEARVTNGARESKFAVMHSMGKPGDWIVLDGLAHYSSYVAAERAGLNVKVVPHAGSPEYYLDPEGYGTAIEEVTKESGKPPVLALVTYPDGSYGNIPDAGKIASVCHEYEVPLLLNGAYCVGRMPVSAKEIGADFIVGSGHKSMAASGPVGVLGVSEEYAPIVFRKSVYSKVKEVELLGCTARGATVMTMIASFPEVVKRVRNWDQEVENARWFSARLEDMGFIQRGQKPHSHDLMFFEAPGFYEISQKIKKGRYFLYKELKERNIHGIKSGLTKYFKLSTFGLGKEKLGVVADSFEEILKKYENV</sequence>
<name>SPSS_METAC</name>
<organism>
    <name type="scientific">Methanosarcina acetivorans (strain ATCC 35395 / DSM 2834 / JCM 12185 / C2A)</name>
    <dbReference type="NCBI Taxonomy" id="188937"/>
    <lineage>
        <taxon>Archaea</taxon>
        <taxon>Methanobacteriati</taxon>
        <taxon>Methanobacteriota</taxon>
        <taxon>Stenosarchaea group</taxon>
        <taxon>Methanomicrobia</taxon>
        <taxon>Methanosarcinales</taxon>
        <taxon>Methanosarcinaceae</taxon>
        <taxon>Methanosarcina</taxon>
    </lineage>
</organism>
<feature type="chain" id="PRO_0000359460" description="O-phospho-L-seryl-tRNA:Cys-tRNA synthase">
    <location>
        <begin position="1"/>
        <end position="386"/>
    </location>
</feature>
<feature type="binding site" evidence="1">
    <location>
        <begin position="89"/>
        <end position="90"/>
    </location>
    <ligand>
        <name>pyridoxal 5'-phosphate</name>
        <dbReference type="ChEBI" id="CHEBI:597326"/>
    </ligand>
</feature>
<feature type="binding site" evidence="1">
    <location>
        <position position="196"/>
    </location>
    <ligand>
        <name>pyridoxal 5'-phosphate</name>
        <dbReference type="ChEBI" id="CHEBI:597326"/>
    </ligand>
</feature>
<feature type="binding site" evidence="1">
    <location>
        <begin position="219"/>
        <end position="221"/>
    </location>
    <ligand>
        <name>pyridoxal 5'-phosphate</name>
        <dbReference type="ChEBI" id="CHEBI:597326"/>
    </ligand>
</feature>
<feature type="modified residue" description="N6-(pyridoxal phosphate)lysine" evidence="1">
    <location>
        <position position="222"/>
    </location>
</feature>
<gene>
    <name type="ordered locus">MA_0722</name>
</gene>
<keyword id="KW-0648">Protein biosynthesis</keyword>
<keyword id="KW-0663">Pyridoxal phosphate</keyword>
<keyword id="KW-1185">Reference proteome</keyword>
<keyword id="KW-0808">Transferase</keyword>
<dbReference type="EC" id="2.5.1.73" evidence="1"/>
<dbReference type="EMBL" id="AE010299">
    <property type="protein sequence ID" value="AAM04162.1"/>
    <property type="molecule type" value="Genomic_DNA"/>
</dbReference>
<dbReference type="RefSeq" id="WP_011020767.1">
    <property type="nucleotide sequence ID" value="NC_003552.1"/>
</dbReference>
<dbReference type="SMR" id="Q8TSS3"/>
<dbReference type="FunCoup" id="Q8TSS3">
    <property type="interactions" value="22"/>
</dbReference>
<dbReference type="STRING" id="188937.MA_0722"/>
<dbReference type="EnsemblBacteria" id="AAM04162">
    <property type="protein sequence ID" value="AAM04162"/>
    <property type="gene ID" value="MA_0722"/>
</dbReference>
<dbReference type="GeneID" id="1472614"/>
<dbReference type="KEGG" id="mac:MA_0722"/>
<dbReference type="HOGENOM" id="CLU_060476_0_0_2"/>
<dbReference type="InParanoid" id="Q8TSS3"/>
<dbReference type="OrthoDB" id="5817at2157"/>
<dbReference type="PhylomeDB" id="Q8TSS3"/>
<dbReference type="Proteomes" id="UP000002487">
    <property type="component" value="Chromosome"/>
</dbReference>
<dbReference type="GO" id="GO:0043766">
    <property type="term" value="F:Sep-tRNA:Cys-tRNA synthase activity"/>
    <property type="evidence" value="ECO:0007669"/>
    <property type="project" value="UniProtKB-UniRule"/>
</dbReference>
<dbReference type="GO" id="GO:0006412">
    <property type="term" value="P:translation"/>
    <property type="evidence" value="ECO:0007669"/>
    <property type="project" value="UniProtKB-KW"/>
</dbReference>
<dbReference type="CDD" id="cd06452">
    <property type="entry name" value="SepCysS"/>
    <property type="match status" value="1"/>
</dbReference>
<dbReference type="Gene3D" id="3.90.1150.10">
    <property type="entry name" value="Aspartate Aminotransferase, domain 1"/>
    <property type="match status" value="1"/>
</dbReference>
<dbReference type="Gene3D" id="3.40.640.10">
    <property type="entry name" value="Type I PLP-dependent aspartate aminotransferase-like (Major domain)"/>
    <property type="match status" value="1"/>
</dbReference>
<dbReference type="HAMAP" id="MF_01675">
    <property type="entry name" value="Sep_Cys_tRNA_synth"/>
    <property type="match status" value="1"/>
</dbReference>
<dbReference type="InterPro" id="IPR015424">
    <property type="entry name" value="PyrdxlP-dep_Trfase"/>
</dbReference>
<dbReference type="InterPro" id="IPR015421">
    <property type="entry name" value="PyrdxlP-dep_Trfase_major"/>
</dbReference>
<dbReference type="InterPro" id="IPR015422">
    <property type="entry name" value="PyrdxlP-dep_Trfase_small"/>
</dbReference>
<dbReference type="InterPro" id="IPR013375">
    <property type="entry name" value="Sep_Cys-tRNA_synth_arc"/>
</dbReference>
<dbReference type="InterPro" id="IPR008829">
    <property type="entry name" value="SepSecS/SepCysS"/>
</dbReference>
<dbReference type="NCBIfam" id="NF006810">
    <property type="entry name" value="PRK09331.1"/>
    <property type="match status" value="1"/>
</dbReference>
<dbReference type="NCBIfam" id="TIGR02539">
    <property type="entry name" value="SepCysS"/>
    <property type="match status" value="1"/>
</dbReference>
<dbReference type="PANTHER" id="PTHR43586">
    <property type="entry name" value="CYSTEINE DESULFURASE"/>
    <property type="match status" value="1"/>
</dbReference>
<dbReference type="PANTHER" id="PTHR43586:SF3">
    <property type="entry name" value="O-PHOSPHO-L-SERYL-TRNA:CYS-TRNA SYNTHASE"/>
    <property type="match status" value="1"/>
</dbReference>
<dbReference type="Pfam" id="PF05889">
    <property type="entry name" value="SepSecS"/>
    <property type="match status" value="1"/>
</dbReference>
<dbReference type="SUPFAM" id="SSF53383">
    <property type="entry name" value="PLP-dependent transferases"/>
    <property type="match status" value="1"/>
</dbReference>
<comment type="function">
    <text evidence="1">Converts O-phospho-L-seryl-tRNA(Cys) (Sep-tRNA(Cys)) to L-cysteinyl-tRNA(Cys) (Cys-tRNA(Cys)).</text>
</comment>
<comment type="catalytic activity">
    <reaction evidence="1">
        <text>O-phospho-L-seryl-tRNA(Cys) + hydrogen sulfide + H(+) = L-cysteinyl-tRNA(Cys) + phosphate</text>
        <dbReference type="Rhea" id="RHEA:25686"/>
        <dbReference type="Rhea" id="RHEA-COMP:9679"/>
        <dbReference type="Rhea" id="RHEA-COMP:9719"/>
        <dbReference type="ChEBI" id="CHEBI:15378"/>
        <dbReference type="ChEBI" id="CHEBI:29919"/>
        <dbReference type="ChEBI" id="CHEBI:43474"/>
        <dbReference type="ChEBI" id="CHEBI:78517"/>
        <dbReference type="ChEBI" id="CHEBI:78551"/>
        <dbReference type="EC" id="2.5.1.73"/>
    </reaction>
</comment>
<comment type="cofactor">
    <cofactor evidence="1">
        <name>pyridoxal 5'-phosphate</name>
        <dbReference type="ChEBI" id="CHEBI:597326"/>
    </cofactor>
</comment>
<comment type="subunit">
    <text evidence="1">Homodimer. Interacts with SepRS.</text>
</comment>
<comment type="similarity">
    <text evidence="1">Belongs to the SepCysS family.</text>
</comment>
<protein>
    <recommendedName>
        <fullName evidence="1">O-phospho-L-seryl-tRNA:Cys-tRNA synthase</fullName>
        <ecNumber evidence="1">2.5.1.73</ecNumber>
    </recommendedName>
    <alternativeName>
        <fullName evidence="1">Sep-tRNA:Cys-tRNA synthase</fullName>
        <shortName evidence="1">SepCysS</shortName>
    </alternativeName>
</protein>
<proteinExistence type="inferred from homology"/>